<protein>
    <recommendedName>
        <fullName evidence="1">Fatty acid oxidation complex subunit alpha</fullName>
    </recommendedName>
    <domain>
        <recommendedName>
            <fullName evidence="1">Enoyl-CoA hydratase/Delta(3)-cis-Delta(2)-trans-enoyl-CoA isomerase/3-hydroxybutyryl-CoA epimerase</fullName>
            <ecNumber evidence="1">4.2.1.17</ecNumber>
            <ecNumber evidence="1">5.1.2.3</ecNumber>
            <ecNumber evidence="1">5.3.3.8</ecNumber>
        </recommendedName>
    </domain>
    <domain>
        <recommendedName>
            <fullName evidence="1">3-hydroxyacyl-CoA dehydrogenase</fullName>
            <ecNumber evidence="1">1.1.1.35</ecNumber>
        </recommendedName>
    </domain>
</protein>
<organism>
    <name type="scientific">Vibrio cholerae serotype O1 (strain ATCC 39315 / El Tor Inaba N16961)</name>
    <dbReference type="NCBI Taxonomy" id="243277"/>
    <lineage>
        <taxon>Bacteria</taxon>
        <taxon>Pseudomonadati</taxon>
        <taxon>Pseudomonadota</taxon>
        <taxon>Gammaproteobacteria</taxon>
        <taxon>Vibrionales</taxon>
        <taxon>Vibrionaceae</taxon>
        <taxon>Vibrio</taxon>
    </lineage>
</organism>
<name>FADB_VIBCH</name>
<reference key="1">
    <citation type="journal article" date="2000" name="Nature">
        <title>DNA sequence of both chromosomes of the cholera pathogen Vibrio cholerae.</title>
        <authorList>
            <person name="Heidelberg J.F."/>
            <person name="Eisen J.A."/>
            <person name="Nelson W.C."/>
            <person name="Clayton R.A."/>
            <person name="Gwinn M.L."/>
            <person name="Dodson R.J."/>
            <person name="Haft D.H."/>
            <person name="Hickey E.K."/>
            <person name="Peterson J.D."/>
            <person name="Umayam L.A."/>
            <person name="Gill S.R."/>
            <person name="Nelson K.E."/>
            <person name="Read T.D."/>
            <person name="Tettelin H."/>
            <person name="Richardson D.L."/>
            <person name="Ermolaeva M.D."/>
            <person name="Vamathevan J.J."/>
            <person name="Bass S."/>
            <person name="Qin H."/>
            <person name="Dragoi I."/>
            <person name="Sellers P."/>
            <person name="McDonald L.A."/>
            <person name="Utterback T.R."/>
            <person name="Fleischmann R.D."/>
            <person name="Nierman W.C."/>
            <person name="White O."/>
            <person name="Salzberg S.L."/>
            <person name="Smith H.O."/>
            <person name="Colwell R.R."/>
            <person name="Mekalanos J.J."/>
            <person name="Venter J.C."/>
            <person name="Fraser C.M."/>
        </authorList>
    </citation>
    <scope>NUCLEOTIDE SEQUENCE [LARGE SCALE GENOMIC DNA]</scope>
    <source>
        <strain>ATCC 39315 / El Tor Inaba N16961</strain>
    </source>
</reference>
<feature type="chain" id="PRO_0000255846" description="Fatty acid oxidation complex subunit alpha">
    <location>
        <begin position="1"/>
        <end position="723"/>
    </location>
</feature>
<feature type="region of interest" description="Enoyl-CoA hydratase/isomerase" evidence="1">
    <location>
        <begin position="1"/>
        <end position="189"/>
    </location>
</feature>
<feature type="region of interest" description="3-hydroxyacyl-CoA dehydrogenase" evidence="1">
    <location>
        <begin position="311"/>
        <end position="723"/>
    </location>
</feature>
<feature type="active site" description="For 3-hydroxyacyl-CoA dehydrogenase activity" evidence="1">
    <location>
        <position position="451"/>
    </location>
</feature>
<feature type="binding site" evidence="1">
    <location>
        <position position="296"/>
    </location>
    <ligand>
        <name>substrate</name>
    </ligand>
</feature>
<feature type="binding site" evidence="1">
    <location>
        <position position="325"/>
    </location>
    <ligand>
        <name>NAD(+)</name>
        <dbReference type="ChEBI" id="CHEBI:57540"/>
    </ligand>
</feature>
<feature type="binding site" evidence="1">
    <location>
        <position position="344"/>
    </location>
    <ligand>
        <name>NAD(+)</name>
        <dbReference type="ChEBI" id="CHEBI:57540"/>
    </ligand>
</feature>
<feature type="binding site" evidence="1">
    <location>
        <begin position="401"/>
        <end position="403"/>
    </location>
    <ligand>
        <name>NAD(+)</name>
        <dbReference type="ChEBI" id="CHEBI:57540"/>
    </ligand>
</feature>
<feature type="binding site" evidence="1">
    <location>
        <position position="408"/>
    </location>
    <ligand>
        <name>NAD(+)</name>
        <dbReference type="ChEBI" id="CHEBI:57540"/>
    </ligand>
</feature>
<feature type="binding site" evidence="1">
    <location>
        <position position="430"/>
    </location>
    <ligand>
        <name>NAD(+)</name>
        <dbReference type="ChEBI" id="CHEBI:57540"/>
    </ligand>
</feature>
<feature type="binding site" evidence="1">
    <location>
        <position position="454"/>
    </location>
    <ligand>
        <name>NAD(+)</name>
        <dbReference type="ChEBI" id="CHEBI:57540"/>
    </ligand>
</feature>
<feature type="binding site" evidence="1">
    <location>
        <position position="501"/>
    </location>
    <ligand>
        <name>substrate</name>
    </ligand>
</feature>
<feature type="binding site" evidence="1">
    <location>
        <position position="661"/>
    </location>
    <ligand>
        <name>substrate</name>
    </ligand>
</feature>
<feature type="site" description="Important for catalytic activity" evidence="1">
    <location>
        <position position="119"/>
    </location>
</feature>
<feature type="site" description="Important for catalytic activity" evidence="1">
    <location>
        <position position="139"/>
    </location>
</feature>
<comment type="function">
    <text evidence="1">Involved in the aerobic and anaerobic degradation of long-chain fatty acids via beta-oxidation cycle. Catalyzes the formation of 3-oxoacyl-CoA from enoyl-CoA via L-3-hydroxyacyl-CoA. It can also use D-3-hydroxyacyl-CoA and cis-3-enoyl-CoA as substrate.</text>
</comment>
<comment type="catalytic activity">
    <reaction evidence="1">
        <text>a (3S)-3-hydroxyacyl-CoA + NAD(+) = a 3-oxoacyl-CoA + NADH + H(+)</text>
        <dbReference type="Rhea" id="RHEA:22432"/>
        <dbReference type="ChEBI" id="CHEBI:15378"/>
        <dbReference type="ChEBI" id="CHEBI:57318"/>
        <dbReference type="ChEBI" id="CHEBI:57540"/>
        <dbReference type="ChEBI" id="CHEBI:57945"/>
        <dbReference type="ChEBI" id="CHEBI:90726"/>
        <dbReference type="EC" id="1.1.1.35"/>
    </reaction>
</comment>
<comment type="catalytic activity">
    <reaction evidence="1">
        <text>a (3S)-3-hydroxyacyl-CoA = a (2E)-enoyl-CoA + H2O</text>
        <dbReference type="Rhea" id="RHEA:16105"/>
        <dbReference type="ChEBI" id="CHEBI:15377"/>
        <dbReference type="ChEBI" id="CHEBI:57318"/>
        <dbReference type="ChEBI" id="CHEBI:58856"/>
        <dbReference type="EC" id="4.2.1.17"/>
    </reaction>
</comment>
<comment type="catalytic activity">
    <reaction evidence="1">
        <text>a 4-saturated-(3S)-3-hydroxyacyl-CoA = a (3E)-enoyl-CoA + H2O</text>
        <dbReference type="Rhea" id="RHEA:20724"/>
        <dbReference type="ChEBI" id="CHEBI:15377"/>
        <dbReference type="ChEBI" id="CHEBI:58521"/>
        <dbReference type="ChEBI" id="CHEBI:137480"/>
        <dbReference type="EC" id="4.2.1.17"/>
    </reaction>
</comment>
<comment type="catalytic activity">
    <reaction evidence="1">
        <text>(3S)-3-hydroxybutanoyl-CoA = (3R)-3-hydroxybutanoyl-CoA</text>
        <dbReference type="Rhea" id="RHEA:21760"/>
        <dbReference type="ChEBI" id="CHEBI:57315"/>
        <dbReference type="ChEBI" id="CHEBI:57316"/>
        <dbReference type="EC" id="5.1.2.3"/>
    </reaction>
</comment>
<comment type="catalytic activity">
    <reaction evidence="1">
        <text>a (3Z)-enoyl-CoA = a 4-saturated (2E)-enoyl-CoA</text>
        <dbReference type="Rhea" id="RHEA:45900"/>
        <dbReference type="ChEBI" id="CHEBI:85097"/>
        <dbReference type="ChEBI" id="CHEBI:85489"/>
        <dbReference type="EC" id="5.3.3.8"/>
    </reaction>
</comment>
<comment type="catalytic activity">
    <reaction evidence="1">
        <text>a (3E)-enoyl-CoA = a 4-saturated (2E)-enoyl-CoA</text>
        <dbReference type="Rhea" id="RHEA:45228"/>
        <dbReference type="ChEBI" id="CHEBI:58521"/>
        <dbReference type="ChEBI" id="CHEBI:85097"/>
        <dbReference type="EC" id="5.3.3.8"/>
    </reaction>
</comment>
<comment type="pathway">
    <text evidence="1">Lipid metabolism; fatty acid beta-oxidation.</text>
</comment>
<comment type="subunit">
    <text evidence="1">Heterotetramer of two alpha chains (FadB) and two beta chains (FadA).</text>
</comment>
<comment type="similarity">
    <text evidence="1">In the N-terminal section; belongs to the enoyl-CoA hydratase/isomerase family.</text>
</comment>
<comment type="similarity">
    <text evidence="1">In the C-terminal section; belongs to the 3-hydroxyacyl-CoA dehydrogenase family.</text>
</comment>
<dbReference type="EC" id="4.2.1.17" evidence="1"/>
<dbReference type="EC" id="5.1.2.3" evidence="1"/>
<dbReference type="EC" id="5.3.3.8" evidence="1"/>
<dbReference type="EC" id="1.1.1.35" evidence="1"/>
<dbReference type="EMBL" id="AE003852">
    <property type="protein sequence ID" value="AAF95897.1"/>
    <property type="molecule type" value="Genomic_DNA"/>
</dbReference>
<dbReference type="PIR" id="H82035">
    <property type="entry name" value="H82035"/>
</dbReference>
<dbReference type="RefSeq" id="NP_232384.1">
    <property type="nucleotide sequence ID" value="NC_002505.1"/>
</dbReference>
<dbReference type="RefSeq" id="WP_000640242.1">
    <property type="nucleotide sequence ID" value="NZ_LT906614.1"/>
</dbReference>
<dbReference type="SMR" id="Q9KNI1"/>
<dbReference type="STRING" id="243277.VC_2758"/>
<dbReference type="DNASU" id="2614935"/>
<dbReference type="EnsemblBacteria" id="AAF95897">
    <property type="protein sequence ID" value="AAF95897"/>
    <property type="gene ID" value="VC_2758"/>
</dbReference>
<dbReference type="KEGG" id="vch:VC_2758"/>
<dbReference type="PATRIC" id="fig|243277.26.peg.2633"/>
<dbReference type="eggNOG" id="COG1024">
    <property type="taxonomic scope" value="Bacteria"/>
</dbReference>
<dbReference type="eggNOG" id="COG1250">
    <property type="taxonomic scope" value="Bacteria"/>
</dbReference>
<dbReference type="HOGENOM" id="CLU_009834_16_3_6"/>
<dbReference type="UniPathway" id="UPA00659"/>
<dbReference type="Proteomes" id="UP000000584">
    <property type="component" value="Chromosome 1"/>
</dbReference>
<dbReference type="GO" id="GO:0036125">
    <property type="term" value="C:fatty acid beta-oxidation multienzyme complex"/>
    <property type="evidence" value="ECO:0007669"/>
    <property type="project" value="InterPro"/>
</dbReference>
<dbReference type="GO" id="GO:0008692">
    <property type="term" value="F:3-hydroxybutyryl-CoA epimerase activity"/>
    <property type="evidence" value="ECO:0007669"/>
    <property type="project" value="UniProtKB-UniRule"/>
</dbReference>
<dbReference type="GO" id="GO:0004165">
    <property type="term" value="F:delta(3)-delta(2)-enoyl-CoA isomerase activity"/>
    <property type="evidence" value="ECO:0007669"/>
    <property type="project" value="UniProtKB-UniRule"/>
</dbReference>
<dbReference type="GO" id="GO:0004300">
    <property type="term" value="F:enoyl-CoA hydratase activity"/>
    <property type="evidence" value="ECO:0000318"/>
    <property type="project" value="GO_Central"/>
</dbReference>
<dbReference type="GO" id="GO:0016509">
    <property type="term" value="F:long-chain-3-hydroxyacyl-CoA dehydrogenase activity"/>
    <property type="evidence" value="ECO:0000318"/>
    <property type="project" value="GO_Central"/>
</dbReference>
<dbReference type="GO" id="GO:0070403">
    <property type="term" value="F:NAD+ binding"/>
    <property type="evidence" value="ECO:0007669"/>
    <property type="project" value="InterPro"/>
</dbReference>
<dbReference type="GO" id="GO:0006635">
    <property type="term" value="P:fatty acid beta-oxidation"/>
    <property type="evidence" value="ECO:0000318"/>
    <property type="project" value="GO_Central"/>
</dbReference>
<dbReference type="CDD" id="cd06558">
    <property type="entry name" value="crotonase-like"/>
    <property type="match status" value="1"/>
</dbReference>
<dbReference type="FunFam" id="1.10.1040.50:FF:000001">
    <property type="entry name" value="Fatty acid oxidation complex subunit alpha"/>
    <property type="match status" value="1"/>
</dbReference>
<dbReference type="FunFam" id="3.40.50.720:FF:000009">
    <property type="entry name" value="Fatty oxidation complex, alpha subunit"/>
    <property type="match status" value="1"/>
</dbReference>
<dbReference type="Gene3D" id="1.10.1040.50">
    <property type="match status" value="1"/>
</dbReference>
<dbReference type="Gene3D" id="3.90.226.10">
    <property type="entry name" value="2-enoyl-CoA Hydratase, Chain A, domain 1"/>
    <property type="match status" value="1"/>
</dbReference>
<dbReference type="Gene3D" id="3.40.50.720">
    <property type="entry name" value="NAD(P)-binding Rossmann-like Domain"/>
    <property type="match status" value="1"/>
</dbReference>
<dbReference type="HAMAP" id="MF_01621">
    <property type="entry name" value="FadB"/>
    <property type="match status" value="1"/>
</dbReference>
<dbReference type="InterPro" id="IPR006180">
    <property type="entry name" value="3-OHacyl-CoA_DH_CS"/>
</dbReference>
<dbReference type="InterPro" id="IPR006176">
    <property type="entry name" value="3-OHacyl-CoA_DH_NAD-bd"/>
</dbReference>
<dbReference type="InterPro" id="IPR006108">
    <property type="entry name" value="3HC_DH_C"/>
</dbReference>
<dbReference type="InterPro" id="IPR008927">
    <property type="entry name" value="6-PGluconate_DH-like_C_sf"/>
</dbReference>
<dbReference type="InterPro" id="IPR029045">
    <property type="entry name" value="ClpP/crotonase-like_dom_sf"/>
</dbReference>
<dbReference type="InterPro" id="IPR001753">
    <property type="entry name" value="Enoyl-CoA_hydra/iso"/>
</dbReference>
<dbReference type="InterPro" id="IPR050136">
    <property type="entry name" value="FA_oxidation_alpha_subunit"/>
</dbReference>
<dbReference type="InterPro" id="IPR012799">
    <property type="entry name" value="FadB"/>
</dbReference>
<dbReference type="InterPro" id="IPR036291">
    <property type="entry name" value="NAD(P)-bd_dom_sf"/>
</dbReference>
<dbReference type="NCBIfam" id="TIGR02437">
    <property type="entry name" value="FadB"/>
    <property type="match status" value="1"/>
</dbReference>
<dbReference type="NCBIfam" id="NF008727">
    <property type="entry name" value="PRK11730.1"/>
    <property type="match status" value="1"/>
</dbReference>
<dbReference type="PANTHER" id="PTHR43612">
    <property type="entry name" value="TRIFUNCTIONAL ENZYME SUBUNIT ALPHA"/>
    <property type="match status" value="1"/>
</dbReference>
<dbReference type="PANTHER" id="PTHR43612:SF3">
    <property type="entry name" value="TRIFUNCTIONAL ENZYME SUBUNIT ALPHA, MITOCHONDRIAL"/>
    <property type="match status" value="1"/>
</dbReference>
<dbReference type="Pfam" id="PF00725">
    <property type="entry name" value="3HCDH"/>
    <property type="match status" value="2"/>
</dbReference>
<dbReference type="Pfam" id="PF02737">
    <property type="entry name" value="3HCDH_N"/>
    <property type="match status" value="1"/>
</dbReference>
<dbReference type="Pfam" id="PF00378">
    <property type="entry name" value="ECH_1"/>
    <property type="match status" value="1"/>
</dbReference>
<dbReference type="SUPFAM" id="SSF48179">
    <property type="entry name" value="6-phosphogluconate dehydrogenase C-terminal domain-like"/>
    <property type="match status" value="2"/>
</dbReference>
<dbReference type="SUPFAM" id="SSF52096">
    <property type="entry name" value="ClpP/crotonase"/>
    <property type="match status" value="1"/>
</dbReference>
<dbReference type="SUPFAM" id="SSF51735">
    <property type="entry name" value="NAD(P)-binding Rossmann-fold domains"/>
    <property type="match status" value="1"/>
</dbReference>
<dbReference type="PROSITE" id="PS00067">
    <property type="entry name" value="3HCDH"/>
    <property type="match status" value="1"/>
</dbReference>
<keyword id="KW-0276">Fatty acid metabolism</keyword>
<keyword id="KW-0413">Isomerase</keyword>
<keyword id="KW-0442">Lipid degradation</keyword>
<keyword id="KW-0443">Lipid metabolism</keyword>
<keyword id="KW-0456">Lyase</keyword>
<keyword id="KW-0511">Multifunctional enzyme</keyword>
<keyword id="KW-0520">NAD</keyword>
<keyword id="KW-0560">Oxidoreductase</keyword>
<keyword id="KW-1185">Reference proteome</keyword>
<gene>
    <name evidence="1" type="primary">fadB</name>
    <name type="ordered locus">VC_2758</name>
</gene>
<proteinExistence type="inferred from homology"/>
<sequence>MIYQAKTLQVKQLANGIAELSFCAPASVNKLDLHTLESLDKALDALAADSSVKGLLLSSDKEAFIVGADITEFLGLFAKPEAELDEWLQFANRIFNKLEDLPFPTLSALKGHTLGGGCECVLATDFRIGDATTSIGLPETKLGIMPGFGGTVRLPRLIGADSAMEIITQGKACRAEEALKVGLLDAIVDSDKLIDSAITTLTQAIEEKLDWQKRRQQKTSALTLSKLEAMMSFTMAKGMVAQVAGKHYPAPMTSVVTIEEAARLPRDAALDIERKHFIKLAKSTEAQALVGIFLNDQYIKGLAKQSAKAASQDTQHAAVLGAGIMGGGIAYQSALKGVPVLMKDIAPHSLELGMTEAAKLLNKQLERGKIDGFKMAGILASITPSLHYAGIDQADVIVEAVVENPKVKAAVLSEVEGLVDTETILTSNTSTIPINLLAKSLKRPQNFCGMHFFNPVHRMPLVEIIRGEHTSEDTINRVVAYAAKMGKSPIVVNDCPGFFVNRVLFPYFAGFSLLMRDGANFTEIDKVMERQFGWPMGPAYLLDVVGIDTAHHAQAVMAEGFPTRMAKSGREAIDALYEAKKFGQKNGSGFYQYTVDKKGKPKKAFSDDVLAILAPVCGAPQSFDPQTLIERTMIPMINEVVLCLEEGIIASAQEADMALVYGLGFPPFRGGVFRYLDTIGIANYVAMAEKYADLGALYQVPQLLKNMAQQGTSFYSAQQVSAL</sequence>
<accession>Q9KNI1</accession>
<evidence type="ECO:0000255" key="1">
    <source>
        <dbReference type="HAMAP-Rule" id="MF_01621"/>
    </source>
</evidence>